<keyword id="KW-0066">ATP synthesis</keyword>
<keyword id="KW-0067">ATP-binding</keyword>
<keyword id="KW-0997">Cell inner membrane</keyword>
<keyword id="KW-1003">Cell membrane</keyword>
<keyword id="KW-0139">CF(1)</keyword>
<keyword id="KW-0375">Hydrogen ion transport</keyword>
<keyword id="KW-0406">Ion transport</keyword>
<keyword id="KW-0472">Membrane</keyword>
<keyword id="KW-0547">Nucleotide-binding</keyword>
<keyword id="KW-1185">Reference proteome</keyword>
<keyword id="KW-1278">Translocase</keyword>
<keyword id="KW-0813">Transport</keyword>
<name>ATPA_RUEPO</name>
<reference key="1">
    <citation type="journal article" date="2004" name="Nature">
        <title>Genome sequence of Silicibacter pomeroyi reveals adaptations to the marine environment.</title>
        <authorList>
            <person name="Moran M.A."/>
            <person name="Buchan A."/>
            <person name="Gonzalez J.M."/>
            <person name="Heidelberg J.F."/>
            <person name="Whitman W.B."/>
            <person name="Kiene R.P."/>
            <person name="Henriksen J.R."/>
            <person name="King G.M."/>
            <person name="Belas R."/>
            <person name="Fuqua C."/>
            <person name="Brinkac L.M."/>
            <person name="Lewis M."/>
            <person name="Johri S."/>
            <person name="Weaver B."/>
            <person name="Pai G."/>
            <person name="Eisen J.A."/>
            <person name="Rahe E."/>
            <person name="Sheldon W.M."/>
            <person name="Ye W."/>
            <person name="Miller T.R."/>
            <person name="Carlton J."/>
            <person name="Rasko D.A."/>
            <person name="Paulsen I.T."/>
            <person name="Ren Q."/>
            <person name="Daugherty S.C."/>
            <person name="DeBoy R.T."/>
            <person name="Dodson R.J."/>
            <person name="Durkin A.S."/>
            <person name="Madupu R."/>
            <person name="Nelson W.C."/>
            <person name="Sullivan S.A."/>
            <person name="Rosovitz M.J."/>
            <person name="Haft D.H."/>
            <person name="Selengut J."/>
            <person name="Ward N."/>
        </authorList>
    </citation>
    <scope>NUCLEOTIDE SEQUENCE [LARGE SCALE GENOMIC DNA]</scope>
    <source>
        <strain>ATCC 700808 / DSM 15171 / DSS-3</strain>
    </source>
</reference>
<reference key="2">
    <citation type="journal article" date="2014" name="Stand. Genomic Sci.">
        <title>An updated genome annotation for the model marine bacterium Ruegeria pomeroyi DSS-3.</title>
        <authorList>
            <person name="Rivers A.R."/>
            <person name="Smith C.B."/>
            <person name="Moran M.A."/>
        </authorList>
    </citation>
    <scope>GENOME REANNOTATION</scope>
    <source>
        <strain>ATCC 700808 / DSM 15171 / DSS-3</strain>
    </source>
</reference>
<gene>
    <name evidence="1" type="primary">atpA</name>
    <name type="ordered locus">SPO3164</name>
</gene>
<organism>
    <name type="scientific">Ruegeria pomeroyi (strain ATCC 700808 / DSM 15171 / DSS-3)</name>
    <name type="common">Silicibacter pomeroyi</name>
    <dbReference type="NCBI Taxonomy" id="246200"/>
    <lineage>
        <taxon>Bacteria</taxon>
        <taxon>Pseudomonadati</taxon>
        <taxon>Pseudomonadota</taxon>
        <taxon>Alphaproteobacteria</taxon>
        <taxon>Rhodobacterales</taxon>
        <taxon>Roseobacteraceae</taxon>
        <taxon>Ruegeria</taxon>
    </lineage>
</organism>
<comment type="function">
    <text evidence="1">Produces ATP from ADP in the presence of a proton gradient across the membrane. The alpha chain is a regulatory subunit.</text>
</comment>
<comment type="catalytic activity">
    <reaction evidence="1">
        <text>ATP + H2O + 4 H(+)(in) = ADP + phosphate + 5 H(+)(out)</text>
        <dbReference type="Rhea" id="RHEA:57720"/>
        <dbReference type="ChEBI" id="CHEBI:15377"/>
        <dbReference type="ChEBI" id="CHEBI:15378"/>
        <dbReference type="ChEBI" id="CHEBI:30616"/>
        <dbReference type="ChEBI" id="CHEBI:43474"/>
        <dbReference type="ChEBI" id="CHEBI:456216"/>
        <dbReference type="EC" id="7.1.2.2"/>
    </reaction>
</comment>
<comment type="subunit">
    <text evidence="1">F-type ATPases have 2 components, CF(1) - the catalytic core - and CF(0) - the membrane proton channel. CF(1) has five subunits: alpha(3), beta(3), gamma(1), delta(1), epsilon(1). CF(0) has three main subunits: a(1), b(2) and c(9-12). The alpha and beta chains form an alternating ring which encloses part of the gamma chain. CF(1) is attached to CF(0) by a central stalk formed by the gamma and epsilon chains, while a peripheral stalk is formed by the delta and b chains.</text>
</comment>
<comment type="subcellular location">
    <subcellularLocation>
        <location evidence="1">Cell inner membrane</location>
        <topology evidence="1">Peripheral membrane protein</topology>
    </subcellularLocation>
</comment>
<comment type="similarity">
    <text evidence="1">Belongs to the ATPase alpha/beta chains family.</text>
</comment>
<dbReference type="EC" id="7.1.2.2" evidence="1"/>
<dbReference type="EMBL" id="CP000031">
    <property type="protein sequence ID" value="AAV96399.1"/>
    <property type="molecule type" value="Genomic_DNA"/>
</dbReference>
<dbReference type="RefSeq" id="WP_011048854.1">
    <property type="nucleotide sequence ID" value="NC_003911.12"/>
</dbReference>
<dbReference type="SMR" id="Q5LNN9"/>
<dbReference type="STRING" id="246200.SPO3164"/>
<dbReference type="PaxDb" id="246200-SPO3164"/>
<dbReference type="KEGG" id="sil:SPO3164"/>
<dbReference type="eggNOG" id="COG0056">
    <property type="taxonomic scope" value="Bacteria"/>
</dbReference>
<dbReference type="HOGENOM" id="CLU_010091_2_1_5"/>
<dbReference type="OrthoDB" id="9803053at2"/>
<dbReference type="Proteomes" id="UP000001023">
    <property type="component" value="Chromosome"/>
</dbReference>
<dbReference type="GO" id="GO:0005886">
    <property type="term" value="C:plasma membrane"/>
    <property type="evidence" value="ECO:0007669"/>
    <property type="project" value="UniProtKB-SubCell"/>
</dbReference>
<dbReference type="GO" id="GO:0045259">
    <property type="term" value="C:proton-transporting ATP synthase complex"/>
    <property type="evidence" value="ECO:0007669"/>
    <property type="project" value="UniProtKB-KW"/>
</dbReference>
<dbReference type="GO" id="GO:0043531">
    <property type="term" value="F:ADP binding"/>
    <property type="evidence" value="ECO:0007669"/>
    <property type="project" value="TreeGrafter"/>
</dbReference>
<dbReference type="GO" id="GO:0005524">
    <property type="term" value="F:ATP binding"/>
    <property type="evidence" value="ECO:0007669"/>
    <property type="project" value="UniProtKB-UniRule"/>
</dbReference>
<dbReference type="GO" id="GO:0046933">
    <property type="term" value="F:proton-transporting ATP synthase activity, rotational mechanism"/>
    <property type="evidence" value="ECO:0007669"/>
    <property type="project" value="UniProtKB-UniRule"/>
</dbReference>
<dbReference type="CDD" id="cd18113">
    <property type="entry name" value="ATP-synt_F1_alpha_C"/>
    <property type="match status" value="1"/>
</dbReference>
<dbReference type="CDD" id="cd18116">
    <property type="entry name" value="ATP-synt_F1_alpha_N"/>
    <property type="match status" value="1"/>
</dbReference>
<dbReference type="CDD" id="cd01132">
    <property type="entry name" value="F1-ATPase_alpha_CD"/>
    <property type="match status" value="1"/>
</dbReference>
<dbReference type="FunFam" id="1.20.150.20:FF:000001">
    <property type="entry name" value="ATP synthase subunit alpha"/>
    <property type="match status" value="1"/>
</dbReference>
<dbReference type="FunFam" id="2.40.30.20:FF:000001">
    <property type="entry name" value="ATP synthase subunit alpha"/>
    <property type="match status" value="1"/>
</dbReference>
<dbReference type="FunFam" id="3.40.50.300:FF:002432">
    <property type="entry name" value="ATP synthase subunit alpha, mitochondrial"/>
    <property type="match status" value="1"/>
</dbReference>
<dbReference type="Gene3D" id="2.40.30.20">
    <property type="match status" value="1"/>
</dbReference>
<dbReference type="Gene3D" id="1.20.150.20">
    <property type="entry name" value="ATP synthase alpha/beta chain, C-terminal domain"/>
    <property type="match status" value="1"/>
</dbReference>
<dbReference type="Gene3D" id="3.40.50.300">
    <property type="entry name" value="P-loop containing nucleotide triphosphate hydrolases"/>
    <property type="match status" value="1"/>
</dbReference>
<dbReference type="HAMAP" id="MF_01346">
    <property type="entry name" value="ATP_synth_alpha_bact"/>
    <property type="match status" value="1"/>
</dbReference>
<dbReference type="InterPro" id="IPR023366">
    <property type="entry name" value="ATP_synth_asu-like_sf"/>
</dbReference>
<dbReference type="InterPro" id="IPR000793">
    <property type="entry name" value="ATP_synth_asu_C"/>
</dbReference>
<dbReference type="InterPro" id="IPR038376">
    <property type="entry name" value="ATP_synth_asu_C_sf"/>
</dbReference>
<dbReference type="InterPro" id="IPR033732">
    <property type="entry name" value="ATP_synth_F1_a_nt-bd_dom"/>
</dbReference>
<dbReference type="InterPro" id="IPR005294">
    <property type="entry name" value="ATP_synth_F1_asu"/>
</dbReference>
<dbReference type="InterPro" id="IPR020003">
    <property type="entry name" value="ATPase_a/bsu_AS"/>
</dbReference>
<dbReference type="InterPro" id="IPR004100">
    <property type="entry name" value="ATPase_F1/V1/A1_a/bsu_N"/>
</dbReference>
<dbReference type="InterPro" id="IPR036121">
    <property type="entry name" value="ATPase_F1/V1/A1_a/bsu_N_sf"/>
</dbReference>
<dbReference type="InterPro" id="IPR000194">
    <property type="entry name" value="ATPase_F1/V1/A1_a/bsu_nucl-bd"/>
</dbReference>
<dbReference type="InterPro" id="IPR027417">
    <property type="entry name" value="P-loop_NTPase"/>
</dbReference>
<dbReference type="NCBIfam" id="TIGR00962">
    <property type="entry name" value="atpA"/>
    <property type="match status" value="1"/>
</dbReference>
<dbReference type="NCBIfam" id="NF009884">
    <property type="entry name" value="PRK13343.1"/>
    <property type="match status" value="1"/>
</dbReference>
<dbReference type="PANTHER" id="PTHR48082">
    <property type="entry name" value="ATP SYNTHASE SUBUNIT ALPHA, MITOCHONDRIAL"/>
    <property type="match status" value="1"/>
</dbReference>
<dbReference type="PANTHER" id="PTHR48082:SF2">
    <property type="entry name" value="ATP SYNTHASE SUBUNIT ALPHA, MITOCHONDRIAL"/>
    <property type="match status" value="1"/>
</dbReference>
<dbReference type="Pfam" id="PF00006">
    <property type="entry name" value="ATP-synt_ab"/>
    <property type="match status" value="1"/>
</dbReference>
<dbReference type="Pfam" id="PF00306">
    <property type="entry name" value="ATP-synt_ab_C"/>
    <property type="match status" value="1"/>
</dbReference>
<dbReference type="Pfam" id="PF02874">
    <property type="entry name" value="ATP-synt_ab_N"/>
    <property type="match status" value="1"/>
</dbReference>
<dbReference type="PIRSF" id="PIRSF039088">
    <property type="entry name" value="F_ATPase_subunit_alpha"/>
    <property type="match status" value="1"/>
</dbReference>
<dbReference type="SUPFAM" id="SSF47917">
    <property type="entry name" value="C-terminal domain of alpha and beta subunits of F1 ATP synthase"/>
    <property type="match status" value="1"/>
</dbReference>
<dbReference type="SUPFAM" id="SSF50615">
    <property type="entry name" value="N-terminal domain of alpha and beta subunits of F1 ATP synthase"/>
    <property type="match status" value="1"/>
</dbReference>
<dbReference type="SUPFAM" id="SSF52540">
    <property type="entry name" value="P-loop containing nucleoside triphosphate hydrolases"/>
    <property type="match status" value="1"/>
</dbReference>
<dbReference type="PROSITE" id="PS00152">
    <property type="entry name" value="ATPASE_ALPHA_BETA"/>
    <property type="match status" value="1"/>
</dbReference>
<protein>
    <recommendedName>
        <fullName evidence="1">ATP synthase subunit alpha</fullName>
        <ecNumber evidence="1">7.1.2.2</ecNumber>
    </recommendedName>
    <alternativeName>
        <fullName evidence="1">ATP synthase F1 sector subunit alpha</fullName>
    </alternativeName>
    <alternativeName>
        <fullName evidence="1">F-ATPase subunit alpha</fullName>
    </alternativeName>
</protein>
<accession>Q5LNN9</accession>
<sequence length="512" mass="54959">MGIQAAEISAILKDQIKNFGQEAEVAEIGRVLSVGDGIARVYGLDNVQAGEMVEFPGGIMGMALNLENDNVGVVIFGSDRDIKEGDTVKRTNSIVDVPQGDELLGRVVDGLGNPIDGKGPINAKLRGVADVKAPGIIPRKSVHEPMATGLKAVDSMIPIGRGQRELIIGDRQTGKTAIALDTILNQKSYNDAAGDDESKKLYCVYVAIGQKRSTVAQLVKKLEENGAMEYSIVVAATASDPAPMQFLAPYAATAMAEYFRDNGRHALIIYDDLSKQAVAYRQMSLLLRRPPGREAYPGDVFYLHSRLLERSAKLNEDFGAGSLTALPVIETQGGDVSAFIPTNVISITDGQIFLETELFYQGIRPAVNTGLSVSRVGSSAQTKAMSSVAGPVKLSLAQYREMAAFAQFGSDLDAATQQLLNRGARLTELMKQPQYSPLTNAEIVCVIFAGTNGYLDKVALADVGRWEAGLLQHLRGKHAELLAWITNEDPKIKDDAAGRVKAALDEYAATFA</sequence>
<evidence type="ECO:0000255" key="1">
    <source>
        <dbReference type="HAMAP-Rule" id="MF_01346"/>
    </source>
</evidence>
<proteinExistence type="inferred from homology"/>
<feature type="chain" id="PRO_0000238355" description="ATP synthase subunit alpha">
    <location>
        <begin position="1"/>
        <end position="512"/>
    </location>
</feature>
<feature type="binding site" evidence="1">
    <location>
        <begin position="169"/>
        <end position="176"/>
    </location>
    <ligand>
        <name>ATP</name>
        <dbReference type="ChEBI" id="CHEBI:30616"/>
    </ligand>
</feature>
<feature type="site" description="Required for activity" evidence="1">
    <location>
        <position position="372"/>
    </location>
</feature>